<organism>
    <name type="scientific">Mycolicibacterium vanbaalenii (strain DSM 7251 / JCM 13017 / BCRC 16820 / KCTC 9966 / NRRL B-24157 / PYR-1)</name>
    <name type="common">Mycobacterium vanbaalenii</name>
    <dbReference type="NCBI Taxonomy" id="350058"/>
    <lineage>
        <taxon>Bacteria</taxon>
        <taxon>Bacillati</taxon>
        <taxon>Actinomycetota</taxon>
        <taxon>Actinomycetes</taxon>
        <taxon>Mycobacteriales</taxon>
        <taxon>Mycobacteriaceae</taxon>
        <taxon>Mycolicibacterium</taxon>
    </lineage>
</organism>
<feature type="chain" id="PRO_0000352577" description="Inositol 2-dehydrogenase 1">
    <location>
        <begin position="1"/>
        <end position="343"/>
    </location>
</feature>
<comment type="function">
    <text evidence="1">Involved in the oxidation of myo-inositol (MI) to 2-keto-myo-inositol (2KMI or 2-inosose).</text>
</comment>
<comment type="catalytic activity">
    <reaction evidence="1">
        <text>myo-inositol + NAD(+) = scyllo-inosose + NADH + H(+)</text>
        <dbReference type="Rhea" id="RHEA:16949"/>
        <dbReference type="ChEBI" id="CHEBI:15378"/>
        <dbReference type="ChEBI" id="CHEBI:17268"/>
        <dbReference type="ChEBI" id="CHEBI:17811"/>
        <dbReference type="ChEBI" id="CHEBI:57540"/>
        <dbReference type="ChEBI" id="CHEBI:57945"/>
        <dbReference type="EC" id="1.1.1.18"/>
    </reaction>
</comment>
<comment type="subunit">
    <text evidence="1">Homotetramer.</text>
</comment>
<comment type="similarity">
    <text evidence="1">Belongs to the Gfo/Idh/MocA family.</text>
</comment>
<dbReference type="EC" id="1.1.1.18" evidence="1"/>
<dbReference type="EMBL" id="CP000511">
    <property type="protein sequence ID" value="ABM11235.1"/>
    <property type="molecule type" value="Genomic_DNA"/>
</dbReference>
<dbReference type="RefSeq" id="WP_011777708.1">
    <property type="nucleotide sequence ID" value="NZ_JACKSD010000202.1"/>
</dbReference>
<dbReference type="SMR" id="A1T235"/>
<dbReference type="STRING" id="350058.Mvan_0387"/>
<dbReference type="KEGG" id="mva:Mvan_0387"/>
<dbReference type="eggNOG" id="COG0673">
    <property type="taxonomic scope" value="Bacteria"/>
</dbReference>
<dbReference type="HOGENOM" id="CLU_023194_0_1_11"/>
<dbReference type="Proteomes" id="UP000009159">
    <property type="component" value="Chromosome"/>
</dbReference>
<dbReference type="GO" id="GO:0050112">
    <property type="term" value="F:inositol 2-dehydrogenase (NAD+) activity"/>
    <property type="evidence" value="ECO:0007669"/>
    <property type="project" value="UniProtKB-UniRule"/>
</dbReference>
<dbReference type="GO" id="GO:0000166">
    <property type="term" value="F:nucleotide binding"/>
    <property type="evidence" value="ECO:0007669"/>
    <property type="project" value="InterPro"/>
</dbReference>
<dbReference type="GO" id="GO:0019310">
    <property type="term" value="P:inositol catabolic process"/>
    <property type="evidence" value="ECO:0007669"/>
    <property type="project" value="UniProtKB-UniRule"/>
</dbReference>
<dbReference type="Gene3D" id="3.30.360.10">
    <property type="entry name" value="Dihydrodipicolinate Reductase, domain 2"/>
    <property type="match status" value="1"/>
</dbReference>
<dbReference type="Gene3D" id="3.40.50.720">
    <property type="entry name" value="NAD(P)-binding Rossmann-like Domain"/>
    <property type="match status" value="1"/>
</dbReference>
<dbReference type="HAMAP" id="MF_01671">
    <property type="entry name" value="IolG"/>
    <property type="match status" value="1"/>
</dbReference>
<dbReference type="InterPro" id="IPR050424">
    <property type="entry name" value="Gfo-Idh-MocA_inositol_DH"/>
</dbReference>
<dbReference type="InterPro" id="IPR004104">
    <property type="entry name" value="Gfo/Idh/MocA-like_OxRdtase_C"/>
</dbReference>
<dbReference type="InterPro" id="IPR000683">
    <property type="entry name" value="Gfo/Idh/MocA-like_OxRdtase_N"/>
</dbReference>
<dbReference type="InterPro" id="IPR023794">
    <property type="entry name" value="MI/DCI_dehydrogenase"/>
</dbReference>
<dbReference type="InterPro" id="IPR036291">
    <property type="entry name" value="NAD(P)-bd_dom_sf"/>
</dbReference>
<dbReference type="PANTHER" id="PTHR43593">
    <property type="match status" value="1"/>
</dbReference>
<dbReference type="PANTHER" id="PTHR43593:SF1">
    <property type="entry name" value="INOSITOL 2-DEHYDROGENASE"/>
    <property type="match status" value="1"/>
</dbReference>
<dbReference type="Pfam" id="PF01408">
    <property type="entry name" value="GFO_IDH_MocA"/>
    <property type="match status" value="1"/>
</dbReference>
<dbReference type="Pfam" id="PF02894">
    <property type="entry name" value="GFO_IDH_MocA_C"/>
    <property type="match status" value="1"/>
</dbReference>
<dbReference type="SUPFAM" id="SSF55347">
    <property type="entry name" value="Glyceraldehyde-3-phosphate dehydrogenase-like, C-terminal domain"/>
    <property type="match status" value="1"/>
</dbReference>
<dbReference type="SUPFAM" id="SSF51735">
    <property type="entry name" value="NAD(P)-binding Rossmann-fold domains"/>
    <property type="match status" value="1"/>
</dbReference>
<reference key="1">
    <citation type="submission" date="2006-12" db="EMBL/GenBank/DDBJ databases">
        <title>Complete sequence of Mycobacterium vanbaalenii PYR-1.</title>
        <authorList>
            <consortium name="US DOE Joint Genome Institute"/>
            <person name="Copeland A."/>
            <person name="Lucas S."/>
            <person name="Lapidus A."/>
            <person name="Barry K."/>
            <person name="Detter J.C."/>
            <person name="Glavina del Rio T."/>
            <person name="Hammon N."/>
            <person name="Israni S."/>
            <person name="Dalin E."/>
            <person name="Tice H."/>
            <person name="Pitluck S."/>
            <person name="Singan V."/>
            <person name="Schmutz J."/>
            <person name="Larimer F."/>
            <person name="Land M."/>
            <person name="Hauser L."/>
            <person name="Kyrpides N."/>
            <person name="Anderson I.J."/>
            <person name="Miller C."/>
            <person name="Richardson P."/>
        </authorList>
    </citation>
    <scope>NUCLEOTIDE SEQUENCE [LARGE SCALE GENOMIC DNA]</scope>
    <source>
        <strain>DSM 7251 / JCM 13017 / BCRC 16820 / KCTC 9966 / NRRL B-24157 / PYR-1</strain>
    </source>
</reference>
<proteinExistence type="inferred from homology"/>
<name>IOLG1_MYCVP</name>
<keyword id="KW-0520">NAD</keyword>
<keyword id="KW-0560">Oxidoreductase</keyword>
<accession>A1T235</accession>
<evidence type="ECO:0000255" key="1">
    <source>
        <dbReference type="HAMAP-Rule" id="MF_01671"/>
    </source>
</evidence>
<gene>
    <name evidence="1" type="primary">iolG1</name>
    <name type="ordered locus">Mvan_0387</name>
</gene>
<sequence length="343" mass="36780">MSEIGVAVLGVGLMGADHVARIASRISGARVAVVNDQVTEKAERLAATITGCRAIADPLDAIADRDVDAVVLATPGPTHEKQLLACLEHRKPVLCEKPLTTDVETSLEVVRREAELGVRLIQVGFMRRFDDEYRALKALIDGGELGNPLVLHCVHRNPVVPGHFDSAMTVRDSLVHEVDVTRFLFDEEIVSIQIVKPTPNSLAREGLFDPQIAILRTASGRHVDVELFVTTGVAYEVRTELVAEKGSVIIGLDVGLVRKSAPGTWGGTITPSFKERFGQAYDTEIQRWVDAVRSGGTTGIYTDGPTAWDGYAATAVCEAGVQALQSGQPVAVSMVDRVSIPGA</sequence>
<protein>
    <recommendedName>
        <fullName evidence="1">Inositol 2-dehydrogenase 1</fullName>
        <ecNumber evidence="1">1.1.1.18</ecNumber>
    </recommendedName>
    <alternativeName>
        <fullName evidence="1">Myo-inositol 2-dehydrogenase 1</fullName>
        <shortName evidence="1">MI 2-dehydrogenase 1</shortName>
    </alternativeName>
</protein>